<protein>
    <recommendedName>
        <fullName evidence="1">2,3,4,5-tetrahydropyridine-2,6-dicarboxylate N-acetyltransferase</fullName>
        <ecNumber evidence="1">2.3.1.89</ecNumber>
    </recommendedName>
    <alternativeName>
        <fullName evidence="1">Tetrahydrodipicolinate N-acetyltransferase</fullName>
        <shortName evidence="1">THP acetyltransferase</shortName>
        <shortName evidence="1">Tetrahydropicolinate acetylase</shortName>
    </alternativeName>
</protein>
<reference key="1">
    <citation type="journal article" date="2004" name="Nucleic Acids Res.">
        <title>The genome sequence of Bacillus cereus ATCC 10987 reveals metabolic adaptations and a large plasmid related to Bacillus anthracis pXO1.</title>
        <authorList>
            <person name="Rasko D.A."/>
            <person name="Ravel J."/>
            <person name="Oekstad O.A."/>
            <person name="Helgason E."/>
            <person name="Cer R.Z."/>
            <person name="Jiang L."/>
            <person name="Shores K.A."/>
            <person name="Fouts D.E."/>
            <person name="Tourasse N.J."/>
            <person name="Angiuoli S.V."/>
            <person name="Kolonay J.F."/>
            <person name="Nelson W.C."/>
            <person name="Kolstoe A.-B."/>
            <person name="Fraser C.M."/>
            <person name="Read T.D."/>
        </authorList>
    </citation>
    <scope>NUCLEOTIDE SEQUENCE [LARGE SCALE GENOMIC DNA]</scope>
    <source>
        <strain>ATCC 10987 / NRS 248</strain>
    </source>
</reference>
<comment type="function">
    <text evidence="1">Catalyzes the transfer of an acetyl group from acetyl-CoA to tetrahydrodipicolinate.</text>
</comment>
<comment type="catalytic activity">
    <reaction evidence="1">
        <text>(S)-2,3,4,5-tetrahydrodipicolinate + acetyl-CoA + H2O = L-2-acetamido-6-oxoheptanedioate + CoA</text>
        <dbReference type="Rhea" id="RHEA:13085"/>
        <dbReference type="ChEBI" id="CHEBI:15377"/>
        <dbReference type="ChEBI" id="CHEBI:16845"/>
        <dbReference type="ChEBI" id="CHEBI:57287"/>
        <dbReference type="ChEBI" id="CHEBI:57288"/>
        <dbReference type="ChEBI" id="CHEBI:58117"/>
        <dbReference type="EC" id="2.3.1.89"/>
    </reaction>
</comment>
<comment type="pathway">
    <text evidence="1">Amino-acid biosynthesis; L-lysine biosynthesis via DAP pathway; LL-2,6-diaminopimelate from (S)-tetrahydrodipicolinate (acetylase route): step 1/3.</text>
</comment>
<comment type="similarity">
    <text evidence="1">Belongs to the transferase hexapeptide repeat family. DapH subfamily.</text>
</comment>
<evidence type="ECO:0000255" key="1">
    <source>
        <dbReference type="HAMAP-Rule" id="MF_01691"/>
    </source>
</evidence>
<name>DAPH_BACC1</name>
<sequence>MKMMDANEIISFIQKSEKKTPVKVYIKGDLKEVTFPETVQAFVNKKSGVLFGEWSEIKTILDENSKYIVDYVVENDRRNSAIPMLDLKGIKARIEPGAIIRDHVEIGDNAVIMMNATINIGAVIGEGSMIDMNAVLGGRATVGKNCHVGAGAVLAGVIEPPSAKPVIVEDDVVIGANVVVLEGVTVGKGAVVAAGAVVTEDVPPYTVVAGTPARVIKEIDEKTKAKTEIKQELRQLNPEK</sequence>
<proteinExistence type="inferred from homology"/>
<organism>
    <name type="scientific">Bacillus cereus (strain ATCC 10987 / NRS 248)</name>
    <dbReference type="NCBI Taxonomy" id="222523"/>
    <lineage>
        <taxon>Bacteria</taxon>
        <taxon>Bacillati</taxon>
        <taxon>Bacillota</taxon>
        <taxon>Bacilli</taxon>
        <taxon>Bacillales</taxon>
        <taxon>Bacillaceae</taxon>
        <taxon>Bacillus</taxon>
        <taxon>Bacillus cereus group</taxon>
    </lineage>
</organism>
<gene>
    <name evidence="1" type="primary">dapH</name>
    <name type="ordered locus">BCE_4030</name>
</gene>
<keyword id="KW-0012">Acyltransferase</keyword>
<keyword id="KW-0028">Amino-acid biosynthesis</keyword>
<keyword id="KW-0220">Diaminopimelate biosynthesis</keyword>
<keyword id="KW-0457">Lysine biosynthesis</keyword>
<keyword id="KW-0677">Repeat</keyword>
<keyword id="KW-0808">Transferase</keyword>
<accession>Q731Y5</accession>
<dbReference type="EC" id="2.3.1.89" evidence="1"/>
<dbReference type="EMBL" id="AE017194">
    <property type="protein sequence ID" value="AAS42932.1"/>
    <property type="molecule type" value="Genomic_DNA"/>
</dbReference>
<dbReference type="SMR" id="Q731Y5"/>
<dbReference type="KEGG" id="bca:BCE_4030"/>
<dbReference type="HOGENOM" id="CLU_103751_0_0_9"/>
<dbReference type="UniPathway" id="UPA00034">
    <property type="reaction ID" value="UER00022"/>
</dbReference>
<dbReference type="Proteomes" id="UP000002527">
    <property type="component" value="Chromosome"/>
</dbReference>
<dbReference type="GO" id="GO:0047200">
    <property type="term" value="F:tetrahydrodipicolinate N-acetyltransferase activity"/>
    <property type="evidence" value="ECO:0007669"/>
    <property type="project" value="UniProtKB-EC"/>
</dbReference>
<dbReference type="GO" id="GO:0019877">
    <property type="term" value="P:diaminopimelate biosynthetic process"/>
    <property type="evidence" value="ECO:0007669"/>
    <property type="project" value="UniProtKB-UniRule"/>
</dbReference>
<dbReference type="GO" id="GO:0009089">
    <property type="term" value="P:lysine biosynthetic process via diaminopimelate"/>
    <property type="evidence" value="ECO:0007669"/>
    <property type="project" value="UniProtKB-UniRule"/>
</dbReference>
<dbReference type="CDD" id="cd03350">
    <property type="entry name" value="LbH_THP_succinylT"/>
    <property type="match status" value="1"/>
</dbReference>
<dbReference type="Gene3D" id="2.160.10.10">
    <property type="entry name" value="Hexapeptide repeat proteins"/>
    <property type="match status" value="1"/>
</dbReference>
<dbReference type="Gene3D" id="3.30.70.250">
    <property type="entry name" value="Malonyl-CoA ACP transacylase, ACP-binding"/>
    <property type="match status" value="1"/>
</dbReference>
<dbReference type="HAMAP" id="MF_01691">
    <property type="entry name" value="DapH"/>
    <property type="match status" value="1"/>
</dbReference>
<dbReference type="InterPro" id="IPR019873">
    <property type="entry name" value="DapH"/>
</dbReference>
<dbReference type="InterPro" id="IPR013710">
    <property type="entry name" value="DapH_N"/>
</dbReference>
<dbReference type="InterPro" id="IPR001451">
    <property type="entry name" value="Hexapep"/>
</dbReference>
<dbReference type="InterPro" id="IPR018357">
    <property type="entry name" value="Hexapep_transf_CS"/>
</dbReference>
<dbReference type="InterPro" id="IPR050179">
    <property type="entry name" value="Trans_hexapeptide_repeat"/>
</dbReference>
<dbReference type="InterPro" id="IPR011004">
    <property type="entry name" value="Trimer_LpxA-like_sf"/>
</dbReference>
<dbReference type="NCBIfam" id="TIGR03532">
    <property type="entry name" value="DapD_Ac"/>
    <property type="match status" value="1"/>
</dbReference>
<dbReference type="PANTHER" id="PTHR43300:SF10">
    <property type="entry name" value="2,3,4,5-TETRAHYDROPYRIDINE-2,6-DICARBOXYLATE N-ACETYLTRANSFERASE"/>
    <property type="match status" value="1"/>
</dbReference>
<dbReference type="PANTHER" id="PTHR43300">
    <property type="entry name" value="ACETYLTRANSFERASE"/>
    <property type="match status" value="1"/>
</dbReference>
<dbReference type="Pfam" id="PF08503">
    <property type="entry name" value="DapH_N"/>
    <property type="match status" value="1"/>
</dbReference>
<dbReference type="Pfam" id="PF00132">
    <property type="entry name" value="Hexapep"/>
    <property type="match status" value="1"/>
</dbReference>
<dbReference type="Pfam" id="PF14602">
    <property type="entry name" value="Hexapep_2"/>
    <property type="match status" value="1"/>
</dbReference>
<dbReference type="SUPFAM" id="SSF51161">
    <property type="entry name" value="Trimeric LpxA-like enzymes"/>
    <property type="match status" value="1"/>
</dbReference>
<dbReference type="PROSITE" id="PS00101">
    <property type="entry name" value="HEXAPEP_TRANSFERASES"/>
    <property type="match status" value="1"/>
</dbReference>
<feature type="chain" id="PRO_0000376628" description="2,3,4,5-tetrahydropyridine-2,6-dicarboxylate N-acetyltransferase">
    <location>
        <begin position="1"/>
        <end position="240"/>
    </location>
</feature>